<comment type="function">
    <text evidence="1">Transcriptional activator that increases RNA Pol II processivity, thereby increasing the level of full-length viral transcripts. Recognizes a hairpin structure at the 5'-LTR of the nascent viral mRNAs referred to as the transactivation responsive RNA element (TAR) and recruits the cyclin T1-CDK9 complex (P-TEFb complex) that will in turn hyperphosphorylate the RNA polymerase II to allow efficient elongation. The CDK9 component of P-TEFb and other Tat-activated kinases hyperphosphorylate the C-terminus of RNA Pol II that becomes stabilized and much more processive. Other factors such as HTATSF1/Tat-SF1, SUPT5H/SPT5, and HTATIP2 are also important for Tat's function. Besides its effect on RNA Pol II processivity, Tat induces chromatin remodeling of proviral genes by recruiting the histone acetyltransferases (HATs) CREBBP, EP300 and PCAF to the chromatin. This also contributes to the increase in proviral transcription rate, especially when the provirus integrates in transcriptionally silent region of the host genome. To ensure maximal activation of the LTR, Tat mediates nuclear translocation of NF-kappa-B by interacting with host RELA. Through its interaction with host TBP, Tat may also modulate transcription initiation. Tat can reactivate a latently infected cell by penetrating in it and transactivating its LTR promoter. In the cytoplasm, Tat is thought to act as a translational activator of HIV-1 mRNAs.</text>
</comment>
<comment type="function">
    <text evidence="1">Extracellular circulating Tat can be endocytosed by surrounding uninfected cells via the binding to several surface receptors such as CD26, CXCR4, heparan sulfate proteoglycans (HSPG) or LDLR. Neurons are rarely infected, but they internalize Tat via their LDLR. Through its interaction with nuclear HATs, Tat is potentially able to control the acetylation-dependent cellular gene expression. Modulates the expression of many cellular genes involved in cell survival, proliferation or in coding for cytokines or cytokine receptors. Tat plays a role in T-cell and neurons apoptosis. Tat induced neurotoxicity and apoptosis probably contribute to neuroAIDS. Circulating Tat also acts as a chemokine-like and/or growth factor-like molecule that binds to specific receptors on the surface of the cells, affecting many cellular pathways. In the vascular system, Tat binds to ITGAV/ITGB3 and ITGA5/ITGB1 integrins dimers at the surface of endothelial cells and competes with bFGF for heparin-binding sites, leading to an excess of soluble bFGF.</text>
</comment>
<comment type="subunit">
    <text evidence="1">Interacts with host CCNT1. Associates with the P-TEFb complex composed at least of Tat, P-TEFb (CDK9 and CCNT1), TAR RNA, RNA Pol II. Recruits the HATs CREBBP, TAF1/TFIID, EP300, PCAF and GCN5L2. Interacts with host KAT5/Tip60; this interaction targets the latter to degradation. Interacts with the host deacetylase SIRT1. Interacts with host capping enzyme RNGTT; this interaction stimulates RNGTT. Binds to host KDR, and to the host integrins ITGAV/ITGB3 and ITGA5/ITGB1. Interacts with host KPNB1/importin beta-1 without previous binding to KPNA1/importin alpha-1. Interacts with EIF2AK2. Interacts with host nucleosome assembly protein NAP1L1; this interaction may be required for the transport of Tat within the nucleus, since the two proteins interact at the nuclear rim. Interacts with host C1QBP/SF2P32; this interaction involves lysine-acetylated Tat. Interacts with the host chemokine receptors CCR2, CCR3 and CXCR4. Interacts with host DPP4/CD26; this interaction may trigger an anti-proliferative effect. Interacts with host LDLR. Interacts with the host extracellular matrix metalloproteinase MMP1. Interacts with host PRMT6; this interaction mediates Tat's methylation. Interacts with, and is ubiquitinated by MDM2/Hdm2. Interacts with host PSMC3 and HTATIP2. Interacts with STAB1; this interaction may overcome SATB1-mediated repression of IL2 and IL2RA (interleukin) in T cells by binding to the same domain than HDAC1. Interacts (when acetylated) with human CDK13, thereby increasing HIV-1 mRNA splicing and promoting the production of the doubly spliced HIV-1 protein Nef. Interacts with host TBP; this interaction modulates the activity of transcriptional pre-initiation complex. Interacts with host RELA. Interacts with host PLSCR1; this interaction negatively regulates Tat transactivation activity by altering its subcellular distribution.</text>
</comment>
<comment type="subcellular location">
    <subcellularLocation>
        <location evidence="1">Host nucleus</location>
        <location evidence="1">Host nucleolus</location>
    </subcellularLocation>
    <subcellularLocation>
        <location evidence="1">Host cytoplasm</location>
    </subcellularLocation>
    <subcellularLocation>
        <location evidence="1">Secreted</location>
    </subcellularLocation>
    <text evidence="1">Probably localizes to both nuclear and nucleolar compartments. Nuclear localization is mediated through the interaction of the nuclear localization signal with importin KPNB1. Secretion occurs through a Golgi-independent pathway. Tat is released from infected cells to the extracellular space where it remains associated to the cell membrane, or is secreted into the cerebrospinal fluid and sera. Extracellular Tat can be endocytosed by surrounding uninfected cells via binding to several receptors depending on the cell type.</text>
</comment>
<comment type="alternative products">
    <event type="alternative splicing"/>
    <isoform>
        <id>P20893-1</id>
        <name>Long</name>
        <sequence type="displayed"/>
    </isoform>
    <isoform>
        <id>P20893-2</id>
        <name>Short</name>
        <sequence type="described" ref="VSP_022420"/>
    </isoform>
</comment>
<comment type="domain">
    <text evidence="1">The cell attachment site mediates the interaction with ITGAV/ITGB3 and ITGA5/ITGB1 integrins, leading to vascular cell migration and invasion. This interaction also provides endothelial cells with the adhesion signal they require to grow in response to mitogens.</text>
</comment>
<comment type="domain">
    <text evidence="1">The Cys-rich region may bind 2 zinc ions. This region is involved in binding to KAT5.</text>
</comment>
<comment type="domain">
    <text evidence="1">The transactivation domain mediates the interaction with CCNT1, GCN5L2, and MDM2.</text>
</comment>
<comment type="domain">
    <text evidence="1">The Arg-rich RNA-binding region binds the TAR RNA. This region also mediates the nuclear localization through direct binding to KPNB1 and is involved in Tat's transfer across cell membranes (protein transduction). The same region is required for the interaction with EP300, PCAF, EIF2AK2 and KDR.</text>
</comment>
<comment type="PTM">
    <text evidence="1">Asymmetrical arginine methylation by host PRMT6 seems to diminish the transactivation capacity of Tat and affects the interaction with host CCNT1.</text>
</comment>
<comment type="PTM">
    <text evidence="1">Acetylation by EP300, CREBBP, GCN5L2/GCN5 and PCAF regulates the transactivation activity of Tat. EP300-mediated acetylation of Lys-50 promotes dissociation of Tat from the TAR RNA through the competitive binding to PCAF's bromodomain. In addition, the non-acetylated Tat's N-terminus can also interact with PCAF. PCAF-mediated acetylation of Lys-28 enhances Tat's binding to CCNT1. Lys-50 is deacetylated by SIRT1.</text>
</comment>
<comment type="PTM">
    <text evidence="1">Polyubiquitination by host MDM2 does not target Tat to degradation, but activates its transactivation function and fosters interaction with CCNT1 and TAR RNA.</text>
</comment>
<comment type="PTM">
    <text evidence="1">Phosphorylated by EIF2AK2 on serine and threonine residues adjacent to the basic region important for TAR RNA binding and function. Phosphorylation of Tat by EIF2AK2 is dependent on the prior activation of EIF2AK2 by dsRNA.</text>
</comment>
<comment type="miscellaneous">
    <text>The OYI isolate was taken from the blood of a healthy Gabonese individual.</text>
</comment>
<comment type="miscellaneous">
    <text evidence="1">HIV-1 lineages are divided in three main groups, M (for Major), O (for Outlier), and N (for New, or Non-M, Non-O). The vast majority of strains found worldwide belong to the group M. Group O seems to be endemic to and largely confined to Cameroon and neighboring countries in West Central Africa, where these viruses represent a small minority of HIV-1 strains. The group N is represented by a limited number of isolates from Cameroonian persons. The group M is further subdivided in 9 clades or subtypes (A to D, F to H, J and K).</text>
</comment>
<comment type="miscellaneous">
    <molecule>Isoform Short</molecule>
    <text evidence="3">Expressed in the late stage of the infection cycle, when unspliced viral RNAs are exported to the cytoplasm by the viral Rev protein.</text>
</comment>
<comment type="similarity">
    <text evidence="1">Belongs to the lentiviruses Tat family.</text>
</comment>
<evidence type="ECO:0000255" key="1">
    <source>
        <dbReference type="HAMAP-Rule" id="MF_04079"/>
    </source>
</evidence>
<evidence type="ECO:0000256" key="2">
    <source>
        <dbReference type="SAM" id="MobiDB-lite"/>
    </source>
</evidence>
<evidence type="ECO:0000305" key="3"/>
<name>TAT_HV1OY</name>
<reference key="1">
    <citation type="journal article" date="1989" name="AIDS">
        <title>A highly defective HIV-1 strain isolated from a healthy Gabonese individual presenting an atypical western blot.</title>
        <authorList>
            <person name="Huet T."/>
            <person name="Dazza M.C."/>
            <person name="Brun-Vezinet F."/>
            <person name="Roelants G.E."/>
            <person name="Wain-Hobson S."/>
        </authorList>
    </citation>
    <scope>NUCLEOTIDE SEQUENCE [GENOMIC RNA]</scope>
</reference>
<reference key="2">
    <citation type="journal article" date="2005" name="Microbes Infect.">
        <title>Decoding Tat: the biology of HIV Tat posttranslational modifications.</title>
        <authorList>
            <person name="Hetzer C."/>
            <person name="Dormeyer W."/>
            <person name="Schnolzer M."/>
            <person name="Ott M."/>
        </authorList>
    </citation>
    <scope>REVIEW</scope>
    <scope>ALTERNATIVE SPLICING</scope>
</reference>
<reference key="3">
    <citation type="journal article" date="2006" name="Front. Biosci.">
        <title>The multiple functions of HIV-1 Tat: proliferation versus apoptosis.</title>
        <authorList>
            <person name="Peruzzi F."/>
        </authorList>
    </citation>
    <scope>REVIEW</scope>
</reference>
<reference key="4">
    <citation type="journal article" date="2006" name="Microbes Infect.">
        <title>HIV tat and neurotoxicity.</title>
        <authorList>
            <person name="King J.E."/>
            <person name="Eugenin E.A."/>
            <person name="Buckner C.M."/>
            <person name="Berman J.W."/>
        </authorList>
    </citation>
    <scope>REVIEW</scope>
</reference>
<proteinExistence type="inferred from homology"/>
<accession>P20893</accession>
<sequence length="101" mass="11561">MEPVDPRLEPWKHPGSQPKTASNNCYCKRCCLHCQVCFTKKGLGISYGRKKRRQRRRAPQDSKTHQVSLSKQPASQPRGDPTGPKESKKKVERETETDPED</sequence>
<feature type="chain" id="PRO_0000085358" description="Protein Tat">
    <location>
        <begin position="1"/>
        <end position="101"/>
    </location>
</feature>
<feature type="region of interest" description="Transactivation" evidence="1">
    <location>
        <begin position="1"/>
        <end position="48"/>
    </location>
</feature>
<feature type="region of interest" description="Disordered" evidence="2">
    <location>
        <begin position="1"/>
        <end position="24"/>
    </location>
</feature>
<feature type="region of interest" description="Interaction with human CREBBP" evidence="1">
    <location>
        <begin position="1"/>
        <end position="24"/>
    </location>
</feature>
<feature type="region of interest" description="Cysteine-rich" evidence="1">
    <location>
        <begin position="22"/>
        <end position="37"/>
    </location>
</feature>
<feature type="region of interest" description="Core" evidence="1">
    <location>
        <begin position="38"/>
        <end position="48"/>
    </location>
</feature>
<feature type="region of interest" description="Disordered" evidence="2">
    <location>
        <begin position="45"/>
        <end position="101"/>
    </location>
</feature>
<feature type="region of interest" description="Interaction with the host capping enzyme RNGTT" evidence="1">
    <location>
        <begin position="49"/>
        <end position="86"/>
    </location>
</feature>
<feature type="short sequence motif" description="Nuclear localization signal, RNA-binding (TAR), and protein transduction" evidence="1">
    <location>
        <begin position="49"/>
        <end position="57"/>
    </location>
</feature>
<feature type="short sequence motif" description="Cell attachment site" evidence="1">
    <location>
        <begin position="78"/>
        <end position="80"/>
    </location>
</feature>
<feature type="compositionally biased region" description="Basic and acidic residues" evidence="2">
    <location>
        <begin position="1"/>
        <end position="12"/>
    </location>
</feature>
<feature type="compositionally biased region" description="Basic residues" evidence="2">
    <location>
        <begin position="48"/>
        <end position="57"/>
    </location>
</feature>
<feature type="compositionally biased region" description="Polar residues" evidence="2">
    <location>
        <begin position="65"/>
        <end position="75"/>
    </location>
</feature>
<feature type="compositionally biased region" description="Basic and acidic residues" evidence="2">
    <location>
        <begin position="83"/>
        <end position="101"/>
    </location>
</feature>
<feature type="binding site" evidence="1">
    <location>
        <position position="25"/>
    </location>
    <ligand>
        <name>Zn(2+)</name>
        <dbReference type="ChEBI" id="CHEBI:29105"/>
        <label>2</label>
    </ligand>
</feature>
<feature type="binding site" evidence="1">
    <location>
        <position position="27"/>
    </location>
    <ligand>
        <name>Zn(2+)</name>
        <dbReference type="ChEBI" id="CHEBI:29105"/>
        <label>2</label>
    </ligand>
</feature>
<feature type="binding site" evidence="1">
    <location>
        <position position="30"/>
    </location>
    <ligand>
        <name>Zn(2+)</name>
        <dbReference type="ChEBI" id="CHEBI:29105"/>
        <label>2</label>
    </ligand>
</feature>
<feature type="binding site" evidence="1">
    <location>
        <position position="33"/>
    </location>
    <ligand>
        <name>Zn(2+)</name>
        <dbReference type="ChEBI" id="CHEBI:29105"/>
        <label>1</label>
    </ligand>
</feature>
<feature type="binding site" evidence="1">
    <location>
        <position position="34"/>
    </location>
    <ligand>
        <name>Zn(2+)</name>
        <dbReference type="ChEBI" id="CHEBI:29105"/>
        <label>1</label>
    </ligand>
</feature>
<feature type="binding site" evidence="1">
    <location>
        <position position="37"/>
    </location>
    <ligand>
        <name>Zn(2+)</name>
        <dbReference type="ChEBI" id="CHEBI:29105"/>
        <label>1</label>
    </ligand>
</feature>
<feature type="site" description="Essential for Tat translocation through the endosomal membrane" evidence="1">
    <location>
        <position position="11"/>
    </location>
</feature>
<feature type="modified residue" description="N6-acetyllysine; by host PCAF" evidence="1">
    <location>
        <position position="28"/>
    </location>
</feature>
<feature type="modified residue" description="N6-acetyllysine; by host EP300 and GCN5L2" evidence="1">
    <location>
        <position position="50"/>
    </location>
</feature>
<feature type="modified residue" description="N6-acetyllysine; by host EP300 and GCN5L2" evidence="1">
    <location>
        <position position="51"/>
    </location>
</feature>
<feature type="modified residue" description="Asymmetric dimethylarginine; by host PRMT6" evidence="1">
    <location>
        <position position="52"/>
    </location>
</feature>
<feature type="modified residue" description="Asymmetric dimethylarginine; by host PRMT6" evidence="1">
    <location>
        <position position="53"/>
    </location>
</feature>
<feature type="cross-link" description="Glycyl lysine isopeptide (Lys-Gly) (interchain with G-Cter in ubiquitin)" evidence="1">
    <location>
        <position position="71"/>
    </location>
</feature>
<feature type="splice variant" id="VSP_022420" description="In isoform Short.">
    <location>
        <begin position="73"/>
        <end position="101"/>
    </location>
</feature>
<organismHost>
    <name type="scientific">Homo sapiens</name>
    <name type="common">Human</name>
    <dbReference type="NCBI Taxonomy" id="9606"/>
</organismHost>
<gene>
    <name evidence="1" type="primary">tat</name>
</gene>
<keyword id="KW-0007">Acetylation</keyword>
<keyword id="KW-0010">Activator</keyword>
<keyword id="KW-0014">AIDS</keyword>
<keyword id="KW-0025">Alternative splicing</keyword>
<keyword id="KW-0053">Apoptosis</keyword>
<keyword id="KW-1035">Host cytoplasm</keyword>
<keyword id="KW-1048">Host nucleus</keyword>
<keyword id="KW-0945">Host-virus interaction</keyword>
<keyword id="KW-1090">Inhibition of host innate immune response by virus</keyword>
<keyword id="KW-1114">Inhibition of host interferon signaling pathway by virus</keyword>
<keyword id="KW-0922">Interferon antiviral system evasion</keyword>
<keyword id="KW-1017">Isopeptide bond</keyword>
<keyword id="KW-0479">Metal-binding</keyword>
<keyword id="KW-0488">Methylation</keyword>
<keyword id="KW-1122">Modulation of host chromatin by virus</keyword>
<keyword id="KW-1126">Modulation of host PP1 activity by virus</keyword>
<keyword id="KW-0597">Phosphoprotein</keyword>
<keyword id="KW-0694">RNA-binding</keyword>
<keyword id="KW-0964">Secreted</keyword>
<keyword id="KW-0804">Transcription</keyword>
<keyword id="KW-0805">Transcription regulation</keyword>
<keyword id="KW-0832">Ubl conjugation</keyword>
<keyword id="KW-0899">Viral immunoevasion</keyword>
<keyword id="KW-0862">Zinc</keyword>
<protein>
    <recommendedName>
        <fullName evidence="1">Protein Tat</fullName>
    </recommendedName>
    <alternativeName>
        <fullName evidence="1">Transactivating regulatory protein</fullName>
    </alternativeName>
</protein>
<dbReference type="EMBL" id="M26727">
    <property type="protein sequence ID" value="AAA83395.1"/>
    <property type="molecule type" value="Genomic_RNA"/>
</dbReference>
<dbReference type="SMR" id="P20893"/>
<dbReference type="Proteomes" id="UP000121275">
    <property type="component" value="Genome"/>
</dbReference>
<dbReference type="GO" id="GO:0005576">
    <property type="term" value="C:extracellular region"/>
    <property type="evidence" value="ECO:0007669"/>
    <property type="project" value="UniProtKB-SubCell"/>
</dbReference>
<dbReference type="GO" id="GO:0030430">
    <property type="term" value="C:host cell cytoplasm"/>
    <property type="evidence" value="ECO:0007669"/>
    <property type="project" value="UniProtKB-SubCell"/>
</dbReference>
<dbReference type="GO" id="GO:0044196">
    <property type="term" value="C:host cell nucleolus"/>
    <property type="evidence" value="ECO:0007669"/>
    <property type="project" value="UniProtKB-SubCell"/>
</dbReference>
<dbReference type="GO" id="GO:0042805">
    <property type="term" value="F:actinin binding"/>
    <property type="evidence" value="ECO:0007669"/>
    <property type="project" value="UniProtKB-UniRule"/>
</dbReference>
<dbReference type="GO" id="GO:0030332">
    <property type="term" value="F:cyclin binding"/>
    <property type="evidence" value="ECO:0007669"/>
    <property type="project" value="UniProtKB-UniRule"/>
</dbReference>
<dbReference type="GO" id="GO:0046872">
    <property type="term" value="F:metal ion binding"/>
    <property type="evidence" value="ECO:0007669"/>
    <property type="project" value="UniProtKB-UniRule"/>
</dbReference>
<dbReference type="GO" id="GO:0019904">
    <property type="term" value="F:protein domain specific binding"/>
    <property type="evidence" value="ECO:0007669"/>
    <property type="project" value="UniProtKB-UniRule"/>
</dbReference>
<dbReference type="GO" id="GO:0004865">
    <property type="term" value="F:protein serine/threonine phosphatase inhibitor activity"/>
    <property type="evidence" value="ECO:0007669"/>
    <property type="project" value="UniProtKB-KW"/>
</dbReference>
<dbReference type="GO" id="GO:0001069">
    <property type="term" value="F:regulatory region RNA binding"/>
    <property type="evidence" value="ECO:0000353"/>
    <property type="project" value="DisProt"/>
</dbReference>
<dbReference type="GO" id="GO:0001070">
    <property type="term" value="F:RNA-binding transcription regulator activity"/>
    <property type="evidence" value="ECO:0007669"/>
    <property type="project" value="UniProtKB-UniRule"/>
</dbReference>
<dbReference type="GO" id="GO:1990970">
    <property type="term" value="F:trans-activation response element binding"/>
    <property type="evidence" value="ECO:0007669"/>
    <property type="project" value="UniProtKB-UniRule"/>
</dbReference>
<dbReference type="GO" id="GO:0006351">
    <property type="term" value="P:DNA-templated transcription"/>
    <property type="evidence" value="ECO:0007669"/>
    <property type="project" value="UniProtKB-UniRule"/>
</dbReference>
<dbReference type="GO" id="GO:0032968">
    <property type="term" value="P:positive regulation of transcription elongation by RNA polymerase II"/>
    <property type="evidence" value="ECO:0007669"/>
    <property type="project" value="UniProtKB-UniRule"/>
</dbReference>
<dbReference type="GO" id="GO:0050434">
    <property type="term" value="P:positive regulation of viral transcription"/>
    <property type="evidence" value="ECO:0007669"/>
    <property type="project" value="UniProtKB-UniRule"/>
</dbReference>
<dbReference type="GO" id="GO:0039525">
    <property type="term" value="P:symbiont-mediated perturbation of host chromatin organization"/>
    <property type="evidence" value="ECO:0007669"/>
    <property type="project" value="UniProtKB-UniRule"/>
</dbReference>
<dbReference type="GO" id="GO:0052170">
    <property type="term" value="P:symbiont-mediated suppression of host innate immune response"/>
    <property type="evidence" value="ECO:0007669"/>
    <property type="project" value="UniProtKB-KW"/>
</dbReference>
<dbReference type="GO" id="GO:0039606">
    <property type="term" value="P:symbiont-mediated suppression of host translation initiation"/>
    <property type="evidence" value="ECO:0007669"/>
    <property type="project" value="UniProtKB-KW"/>
</dbReference>
<dbReference type="GO" id="GO:0039502">
    <property type="term" value="P:symbiont-mediated suppression of host type I interferon-mediated signaling pathway"/>
    <property type="evidence" value="ECO:0007669"/>
    <property type="project" value="UniProtKB-UniRule"/>
</dbReference>
<dbReference type="Gene3D" id="4.10.20.10">
    <property type="entry name" value="Tat domain"/>
    <property type="match status" value="1"/>
</dbReference>
<dbReference type="HAMAP" id="MF_04079">
    <property type="entry name" value="HIV_TAT"/>
    <property type="match status" value="1"/>
</dbReference>
<dbReference type="InterPro" id="IPR001831">
    <property type="entry name" value="IV_Tat"/>
</dbReference>
<dbReference type="InterPro" id="IPR036963">
    <property type="entry name" value="Tat_dom_sf"/>
</dbReference>
<dbReference type="Pfam" id="PF00539">
    <property type="entry name" value="Tat"/>
    <property type="match status" value="1"/>
</dbReference>
<dbReference type="PRINTS" id="PR00055">
    <property type="entry name" value="HIVTATDOMAIN"/>
</dbReference>
<organism>
    <name type="scientific">Human immunodeficiency virus type 1 group M subtype B (isolate OYI)</name>
    <name type="common">HIV-1</name>
    <dbReference type="NCBI Taxonomy" id="11699"/>
    <lineage>
        <taxon>Viruses</taxon>
        <taxon>Riboviria</taxon>
        <taxon>Pararnavirae</taxon>
        <taxon>Artverviricota</taxon>
        <taxon>Revtraviricetes</taxon>
        <taxon>Ortervirales</taxon>
        <taxon>Retroviridae</taxon>
        <taxon>Orthoretrovirinae</taxon>
        <taxon>Lentivirus</taxon>
        <taxon>Human immunodeficiency virus type 1</taxon>
    </lineage>
</organism>